<reference key="1">
    <citation type="journal article" date="2007" name="J. Bacteriol.">
        <title>Whole-genome analysis of the methyl tert-butyl ether-degrading beta-proteobacterium Methylibium petroleiphilum PM1.</title>
        <authorList>
            <person name="Kane S.R."/>
            <person name="Chakicherla A.Y."/>
            <person name="Chain P.S.G."/>
            <person name="Schmidt R."/>
            <person name="Shin M.W."/>
            <person name="Legler T.C."/>
            <person name="Scow K.M."/>
            <person name="Larimer F.W."/>
            <person name="Lucas S.M."/>
            <person name="Richardson P.M."/>
            <person name="Hristova K.R."/>
        </authorList>
    </citation>
    <scope>NUCLEOTIDE SEQUENCE [LARGE SCALE GENOMIC DNA]</scope>
    <source>
        <strain>ATCC BAA-1232 / LMG 22953 / PM1</strain>
    </source>
</reference>
<protein>
    <recommendedName>
        <fullName evidence="1">Ketol-acid reductoisomerase (NADP(+))</fullName>
        <shortName evidence="1">KARI</shortName>
        <ecNumber evidence="1">1.1.1.86</ecNumber>
    </recommendedName>
    <alternativeName>
        <fullName evidence="1">Acetohydroxy-acid isomeroreductase</fullName>
        <shortName evidence="1">AHIR</shortName>
    </alternativeName>
    <alternativeName>
        <fullName evidence="1">Alpha-keto-beta-hydroxylacyl reductoisomerase</fullName>
    </alternativeName>
    <alternativeName>
        <fullName evidence="1">Ketol-acid reductoisomerase type 1</fullName>
    </alternativeName>
    <alternativeName>
        <fullName evidence="1">Ketol-acid reductoisomerase type I</fullName>
    </alternativeName>
</protein>
<evidence type="ECO:0000255" key="1">
    <source>
        <dbReference type="HAMAP-Rule" id="MF_00435"/>
    </source>
</evidence>
<evidence type="ECO:0000255" key="2">
    <source>
        <dbReference type="PROSITE-ProRule" id="PRU01197"/>
    </source>
</evidence>
<evidence type="ECO:0000255" key="3">
    <source>
        <dbReference type="PROSITE-ProRule" id="PRU01198"/>
    </source>
</evidence>
<gene>
    <name evidence="1" type="primary">ilvC</name>
    <name type="ordered locus">Mpe_A2103</name>
</gene>
<feature type="chain" id="PRO_1000050533" description="Ketol-acid reductoisomerase (NADP(+))">
    <location>
        <begin position="1"/>
        <end position="338"/>
    </location>
</feature>
<feature type="domain" description="KARI N-terminal Rossmann" evidence="2">
    <location>
        <begin position="1"/>
        <end position="181"/>
    </location>
</feature>
<feature type="domain" description="KARI C-terminal knotted" evidence="3">
    <location>
        <begin position="182"/>
        <end position="327"/>
    </location>
</feature>
<feature type="active site" evidence="1">
    <location>
        <position position="107"/>
    </location>
</feature>
<feature type="binding site" evidence="1">
    <location>
        <begin position="24"/>
        <end position="27"/>
    </location>
    <ligand>
        <name>NADP(+)</name>
        <dbReference type="ChEBI" id="CHEBI:58349"/>
    </ligand>
</feature>
<feature type="binding site" evidence="1">
    <location>
        <position position="47"/>
    </location>
    <ligand>
        <name>NADP(+)</name>
        <dbReference type="ChEBI" id="CHEBI:58349"/>
    </ligand>
</feature>
<feature type="binding site" evidence="1">
    <location>
        <position position="52"/>
    </location>
    <ligand>
        <name>NADP(+)</name>
        <dbReference type="ChEBI" id="CHEBI:58349"/>
    </ligand>
</feature>
<feature type="binding site" evidence="1">
    <location>
        <position position="133"/>
    </location>
    <ligand>
        <name>NADP(+)</name>
        <dbReference type="ChEBI" id="CHEBI:58349"/>
    </ligand>
</feature>
<feature type="binding site" evidence="1">
    <location>
        <position position="190"/>
    </location>
    <ligand>
        <name>Mg(2+)</name>
        <dbReference type="ChEBI" id="CHEBI:18420"/>
        <label>1</label>
    </ligand>
</feature>
<feature type="binding site" evidence="1">
    <location>
        <position position="190"/>
    </location>
    <ligand>
        <name>Mg(2+)</name>
        <dbReference type="ChEBI" id="CHEBI:18420"/>
        <label>2</label>
    </ligand>
</feature>
<feature type="binding site" evidence="1">
    <location>
        <position position="194"/>
    </location>
    <ligand>
        <name>Mg(2+)</name>
        <dbReference type="ChEBI" id="CHEBI:18420"/>
        <label>1</label>
    </ligand>
</feature>
<feature type="binding site" evidence="1">
    <location>
        <position position="226"/>
    </location>
    <ligand>
        <name>Mg(2+)</name>
        <dbReference type="ChEBI" id="CHEBI:18420"/>
        <label>2</label>
    </ligand>
</feature>
<feature type="binding site" evidence="1">
    <location>
        <position position="230"/>
    </location>
    <ligand>
        <name>Mg(2+)</name>
        <dbReference type="ChEBI" id="CHEBI:18420"/>
        <label>2</label>
    </ligand>
</feature>
<feature type="binding site" evidence="1">
    <location>
        <position position="251"/>
    </location>
    <ligand>
        <name>substrate</name>
    </ligand>
</feature>
<keyword id="KW-0028">Amino-acid biosynthesis</keyword>
<keyword id="KW-0100">Branched-chain amino acid biosynthesis</keyword>
<keyword id="KW-0460">Magnesium</keyword>
<keyword id="KW-0479">Metal-binding</keyword>
<keyword id="KW-0521">NADP</keyword>
<keyword id="KW-0560">Oxidoreductase</keyword>
<keyword id="KW-1185">Reference proteome</keyword>
<name>ILVC_METPP</name>
<proteinExistence type="inferred from homology"/>
<sequence>MKVYYDKDADLSLIKGKSVAIIGYGSQGHAHAQNLNDSGVKVTVGLRRGGASWNKVEKAGLKVAEVADAVKSADVVMILLPDEQIASVYSAEVAPNIKQGASLAFAHGFNVHYGQVVPREDLDVWMVAPKAPGHTVRNTYTQGGGVPHLIAVHADKTGKARDLALSYAAANGGGKAGIIETNFREETETDLFGEQAVLCGGTVELIKAGFETLVEAGYAPEMAYFECLHELKLIVDLIYEGGIANMNYSISNNAEYGEYVTGPRVVTEDTKAAMRQCLKDIQTGEYAKSFILENRAGAPTLLSRRRLTAEHDIEVVGEKLRAMMPWIKANKLVDKSRN</sequence>
<comment type="function">
    <text evidence="1">Involved in the biosynthesis of branched-chain amino acids (BCAA). Catalyzes an alkyl-migration followed by a ketol-acid reduction of (S)-2-acetolactate (S2AL) to yield (R)-2,3-dihydroxy-isovalerate. In the isomerase reaction, S2AL is rearranged via a Mg-dependent methyl migration to produce 3-hydroxy-3-methyl-2-ketobutyrate (HMKB). In the reductase reaction, this 2-ketoacid undergoes a metal-dependent reduction by NADPH to yield (R)-2,3-dihydroxy-isovalerate.</text>
</comment>
<comment type="catalytic activity">
    <reaction evidence="1">
        <text>(2R)-2,3-dihydroxy-3-methylbutanoate + NADP(+) = (2S)-2-acetolactate + NADPH + H(+)</text>
        <dbReference type="Rhea" id="RHEA:22068"/>
        <dbReference type="ChEBI" id="CHEBI:15378"/>
        <dbReference type="ChEBI" id="CHEBI:49072"/>
        <dbReference type="ChEBI" id="CHEBI:57783"/>
        <dbReference type="ChEBI" id="CHEBI:58349"/>
        <dbReference type="ChEBI" id="CHEBI:58476"/>
        <dbReference type="EC" id="1.1.1.86"/>
    </reaction>
</comment>
<comment type="catalytic activity">
    <reaction evidence="1">
        <text>(2R,3R)-2,3-dihydroxy-3-methylpentanoate + NADP(+) = (S)-2-ethyl-2-hydroxy-3-oxobutanoate + NADPH + H(+)</text>
        <dbReference type="Rhea" id="RHEA:13493"/>
        <dbReference type="ChEBI" id="CHEBI:15378"/>
        <dbReference type="ChEBI" id="CHEBI:49256"/>
        <dbReference type="ChEBI" id="CHEBI:49258"/>
        <dbReference type="ChEBI" id="CHEBI:57783"/>
        <dbReference type="ChEBI" id="CHEBI:58349"/>
        <dbReference type="EC" id="1.1.1.86"/>
    </reaction>
</comment>
<comment type="cofactor">
    <cofactor evidence="1">
        <name>Mg(2+)</name>
        <dbReference type="ChEBI" id="CHEBI:18420"/>
    </cofactor>
    <text evidence="1">Binds 2 magnesium ions per subunit.</text>
</comment>
<comment type="pathway">
    <text evidence="1">Amino-acid biosynthesis; L-isoleucine biosynthesis; L-isoleucine from 2-oxobutanoate: step 2/4.</text>
</comment>
<comment type="pathway">
    <text evidence="1">Amino-acid biosynthesis; L-valine biosynthesis; L-valine from pyruvate: step 2/4.</text>
</comment>
<comment type="similarity">
    <text evidence="1">Belongs to the ketol-acid reductoisomerase family.</text>
</comment>
<dbReference type="EC" id="1.1.1.86" evidence="1"/>
<dbReference type="EMBL" id="CP000555">
    <property type="protein sequence ID" value="ABM95059.1"/>
    <property type="molecule type" value="Genomic_DNA"/>
</dbReference>
<dbReference type="RefSeq" id="WP_011829696.1">
    <property type="nucleotide sequence ID" value="NC_008825.1"/>
</dbReference>
<dbReference type="SMR" id="A2SHM0"/>
<dbReference type="STRING" id="420662.Mpe_A2103"/>
<dbReference type="KEGG" id="mpt:Mpe_A2103"/>
<dbReference type="eggNOG" id="COG0059">
    <property type="taxonomic scope" value="Bacteria"/>
</dbReference>
<dbReference type="HOGENOM" id="CLU_033821_0_1_4"/>
<dbReference type="UniPathway" id="UPA00047">
    <property type="reaction ID" value="UER00056"/>
</dbReference>
<dbReference type="UniPathway" id="UPA00049">
    <property type="reaction ID" value="UER00060"/>
</dbReference>
<dbReference type="Proteomes" id="UP000000366">
    <property type="component" value="Chromosome"/>
</dbReference>
<dbReference type="GO" id="GO:0005829">
    <property type="term" value="C:cytosol"/>
    <property type="evidence" value="ECO:0007669"/>
    <property type="project" value="TreeGrafter"/>
</dbReference>
<dbReference type="GO" id="GO:0004455">
    <property type="term" value="F:ketol-acid reductoisomerase activity"/>
    <property type="evidence" value="ECO:0007669"/>
    <property type="project" value="UniProtKB-UniRule"/>
</dbReference>
<dbReference type="GO" id="GO:0000287">
    <property type="term" value="F:magnesium ion binding"/>
    <property type="evidence" value="ECO:0007669"/>
    <property type="project" value="UniProtKB-UniRule"/>
</dbReference>
<dbReference type="GO" id="GO:0050661">
    <property type="term" value="F:NADP binding"/>
    <property type="evidence" value="ECO:0007669"/>
    <property type="project" value="InterPro"/>
</dbReference>
<dbReference type="GO" id="GO:0009097">
    <property type="term" value="P:isoleucine biosynthetic process"/>
    <property type="evidence" value="ECO:0007669"/>
    <property type="project" value="UniProtKB-UniRule"/>
</dbReference>
<dbReference type="GO" id="GO:0009099">
    <property type="term" value="P:L-valine biosynthetic process"/>
    <property type="evidence" value="ECO:0007669"/>
    <property type="project" value="UniProtKB-UniRule"/>
</dbReference>
<dbReference type="FunFam" id="3.40.50.720:FF:000023">
    <property type="entry name" value="Ketol-acid reductoisomerase (NADP(+))"/>
    <property type="match status" value="1"/>
</dbReference>
<dbReference type="Gene3D" id="6.10.240.10">
    <property type="match status" value="1"/>
</dbReference>
<dbReference type="Gene3D" id="3.40.50.720">
    <property type="entry name" value="NAD(P)-binding Rossmann-like Domain"/>
    <property type="match status" value="1"/>
</dbReference>
<dbReference type="HAMAP" id="MF_00435">
    <property type="entry name" value="IlvC"/>
    <property type="match status" value="1"/>
</dbReference>
<dbReference type="InterPro" id="IPR008927">
    <property type="entry name" value="6-PGluconate_DH-like_C_sf"/>
</dbReference>
<dbReference type="InterPro" id="IPR013023">
    <property type="entry name" value="KARI"/>
</dbReference>
<dbReference type="InterPro" id="IPR000506">
    <property type="entry name" value="KARI_C"/>
</dbReference>
<dbReference type="InterPro" id="IPR013116">
    <property type="entry name" value="KARI_N"/>
</dbReference>
<dbReference type="InterPro" id="IPR014359">
    <property type="entry name" value="KARI_prok"/>
</dbReference>
<dbReference type="InterPro" id="IPR036291">
    <property type="entry name" value="NAD(P)-bd_dom_sf"/>
</dbReference>
<dbReference type="NCBIfam" id="TIGR00465">
    <property type="entry name" value="ilvC"/>
    <property type="match status" value="1"/>
</dbReference>
<dbReference type="NCBIfam" id="NF004017">
    <property type="entry name" value="PRK05479.1"/>
    <property type="match status" value="1"/>
</dbReference>
<dbReference type="NCBIfam" id="NF009940">
    <property type="entry name" value="PRK13403.1"/>
    <property type="match status" value="1"/>
</dbReference>
<dbReference type="PANTHER" id="PTHR21371">
    <property type="entry name" value="KETOL-ACID REDUCTOISOMERASE, MITOCHONDRIAL"/>
    <property type="match status" value="1"/>
</dbReference>
<dbReference type="PANTHER" id="PTHR21371:SF1">
    <property type="entry name" value="KETOL-ACID REDUCTOISOMERASE, MITOCHONDRIAL"/>
    <property type="match status" value="1"/>
</dbReference>
<dbReference type="Pfam" id="PF01450">
    <property type="entry name" value="KARI_C"/>
    <property type="match status" value="1"/>
</dbReference>
<dbReference type="Pfam" id="PF07991">
    <property type="entry name" value="KARI_N"/>
    <property type="match status" value="1"/>
</dbReference>
<dbReference type="PIRSF" id="PIRSF000116">
    <property type="entry name" value="IlvC_gammaproteo"/>
    <property type="match status" value="1"/>
</dbReference>
<dbReference type="SUPFAM" id="SSF48179">
    <property type="entry name" value="6-phosphogluconate dehydrogenase C-terminal domain-like"/>
    <property type="match status" value="1"/>
</dbReference>
<dbReference type="SUPFAM" id="SSF51735">
    <property type="entry name" value="NAD(P)-binding Rossmann-fold domains"/>
    <property type="match status" value="1"/>
</dbReference>
<dbReference type="PROSITE" id="PS51851">
    <property type="entry name" value="KARI_C"/>
    <property type="match status" value="1"/>
</dbReference>
<dbReference type="PROSITE" id="PS51850">
    <property type="entry name" value="KARI_N"/>
    <property type="match status" value="1"/>
</dbReference>
<organism>
    <name type="scientific">Methylibium petroleiphilum (strain ATCC BAA-1232 / LMG 22953 / PM1)</name>
    <dbReference type="NCBI Taxonomy" id="420662"/>
    <lineage>
        <taxon>Bacteria</taxon>
        <taxon>Pseudomonadati</taxon>
        <taxon>Pseudomonadota</taxon>
        <taxon>Betaproteobacteria</taxon>
        <taxon>Burkholderiales</taxon>
        <taxon>Sphaerotilaceae</taxon>
        <taxon>Methylibium</taxon>
    </lineage>
</organism>
<accession>A2SHM0</accession>